<protein>
    <recommendedName>
        <fullName evidence="1">ATP synthase subunit b</fullName>
    </recommendedName>
    <alternativeName>
        <fullName evidence="1">ATP synthase F(0) sector subunit b</fullName>
    </alternativeName>
    <alternativeName>
        <fullName evidence="1">ATPase subunit I</fullName>
    </alternativeName>
    <alternativeName>
        <fullName evidence="1">F-type ATPase subunit b</fullName>
        <shortName evidence="1">F-ATPase subunit b</shortName>
    </alternativeName>
</protein>
<proteinExistence type="inferred from homology"/>
<accession>P0ABA3</accession>
<accession>P00859</accession>
<reference key="1">
    <citation type="journal article" date="2002" name="Nucleic Acids Res.">
        <title>Genome sequence of Shigella flexneri 2a: insights into pathogenicity through comparison with genomes of Escherichia coli K12 and O157.</title>
        <authorList>
            <person name="Jin Q."/>
            <person name="Yuan Z."/>
            <person name="Xu J."/>
            <person name="Wang Y."/>
            <person name="Shen Y."/>
            <person name="Lu W."/>
            <person name="Wang J."/>
            <person name="Liu H."/>
            <person name="Yang J."/>
            <person name="Yang F."/>
            <person name="Zhang X."/>
            <person name="Zhang J."/>
            <person name="Yang G."/>
            <person name="Wu H."/>
            <person name="Qu D."/>
            <person name="Dong J."/>
            <person name="Sun L."/>
            <person name="Xue Y."/>
            <person name="Zhao A."/>
            <person name="Gao Y."/>
            <person name="Zhu J."/>
            <person name="Kan B."/>
            <person name="Ding K."/>
            <person name="Chen S."/>
            <person name="Cheng H."/>
            <person name="Yao Z."/>
            <person name="He B."/>
            <person name="Chen R."/>
            <person name="Ma D."/>
            <person name="Qiang B."/>
            <person name="Wen Y."/>
            <person name="Hou Y."/>
            <person name="Yu J."/>
        </authorList>
    </citation>
    <scope>NUCLEOTIDE SEQUENCE [LARGE SCALE GENOMIC DNA]</scope>
    <source>
        <strain>301 / Serotype 2a</strain>
    </source>
</reference>
<reference key="2">
    <citation type="journal article" date="2003" name="Infect. Immun.">
        <title>Complete genome sequence and comparative genomics of Shigella flexneri serotype 2a strain 2457T.</title>
        <authorList>
            <person name="Wei J."/>
            <person name="Goldberg M.B."/>
            <person name="Burland V."/>
            <person name="Venkatesan M.M."/>
            <person name="Deng W."/>
            <person name="Fournier G."/>
            <person name="Mayhew G.F."/>
            <person name="Plunkett G. III"/>
            <person name="Rose D.J."/>
            <person name="Darling A."/>
            <person name="Mau B."/>
            <person name="Perna N.T."/>
            <person name="Payne S.M."/>
            <person name="Runyen-Janecky L.J."/>
            <person name="Zhou S."/>
            <person name="Schwartz D.C."/>
            <person name="Blattner F.R."/>
        </authorList>
    </citation>
    <scope>NUCLEOTIDE SEQUENCE [LARGE SCALE GENOMIC DNA]</scope>
    <source>
        <strain>ATCC 700930 / 2457T / Serotype 2a</strain>
    </source>
</reference>
<name>ATPF_SHIFL</name>
<evidence type="ECO:0000255" key="1">
    <source>
        <dbReference type="HAMAP-Rule" id="MF_01398"/>
    </source>
</evidence>
<organism>
    <name type="scientific">Shigella flexneri</name>
    <dbReference type="NCBI Taxonomy" id="623"/>
    <lineage>
        <taxon>Bacteria</taxon>
        <taxon>Pseudomonadati</taxon>
        <taxon>Pseudomonadota</taxon>
        <taxon>Gammaproteobacteria</taxon>
        <taxon>Enterobacterales</taxon>
        <taxon>Enterobacteriaceae</taxon>
        <taxon>Shigella</taxon>
    </lineage>
</organism>
<gene>
    <name evidence="1" type="primary">atpF</name>
    <name type="ordered locus">SF3816</name>
    <name type="ordered locus">S3952</name>
</gene>
<keyword id="KW-0066">ATP synthesis</keyword>
<keyword id="KW-0997">Cell inner membrane</keyword>
<keyword id="KW-1003">Cell membrane</keyword>
<keyword id="KW-0138">CF(0)</keyword>
<keyword id="KW-0375">Hydrogen ion transport</keyword>
<keyword id="KW-0406">Ion transport</keyword>
<keyword id="KW-0472">Membrane</keyword>
<keyword id="KW-1185">Reference proteome</keyword>
<keyword id="KW-0812">Transmembrane</keyword>
<keyword id="KW-1133">Transmembrane helix</keyword>
<keyword id="KW-0813">Transport</keyword>
<dbReference type="EMBL" id="AE005674">
    <property type="protein sequence ID" value="AAN45256.1"/>
    <property type="molecule type" value="Genomic_DNA"/>
</dbReference>
<dbReference type="EMBL" id="AE014073">
    <property type="protein sequence ID" value="AAP18941.1"/>
    <property type="molecule type" value="Genomic_DNA"/>
</dbReference>
<dbReference type="RefSeq" id="NP_709549.1">
    <property type="nucleotide sequence ID" value="NC_004337.2"/>
</dbReference>
<dbReference type="RefSeq" id="WP_001052219.1">
    <property type="nucleotide sequence ID" value="NZ_WPGW01000050.1"/>
</dbReference>
<dbReference type="SMR" id="P0ABA3"/>
<dbReference type="STRING" id="198214.SF3816"/>
<dbReference type="PaxDb" id="198214-SF3816"/>
<dbReference type="GeneID" id="1026047"/>
<dbReference type="GeneID" id="93778231"/>
<dbReference type="KEGG" id="sfl:SF3816"/>
<dbReference type="KEGG" id="sfx:S3952"/>
<dbReference type="PATRIC" id="fig|198214.7.peg.4503"/>
<dbReference type="HOGENOM" id="CLU_079215_4_5_6"/>
<dbReference type="Proteomes" id="UP000001006">
    <property type="component" value="Chromosome"/>
</dbReference>
<dbReference type="Proteomes" id="UP000002673">
    <property type="component" value="Chromosome"/>
</dbReference>
<dbReference type="GO" id="GO:0005886">
    <property type="term" value="C:plasma membrane"/>
    <property type="evidence" value="ECO:0007669"/>
    <property type="project" value="UniProtKB-SubCell"/>
</dbReference>
<dbReference type="GO" id="GO:0045259">
    <property type="term" value="C:proton-transporting ATP synthase complex"/>
    <property type="evidence" value="ECO:0007669"/>
    <property type="project" value="UniProtKB-KW"/>
</dbReference>
<dbReference type="GO" id="GO:0046933">
    <property type="term" value="F:proton-transporting ATP synthase activity, rotational mechanism"/>
    <property type="evidence" value="ECO:0007669"/>
    <property type="project" value="UniProtKB-UniRule"/>
</dbReference>
<dbReference type="GO" id="GO:0046961">
    <property type="term" value="F:proton-transporting ATPase activity, rotational mechanism"/>
    <property type="evidence" value="ECO:0007669"/>
    <property type="project" value="TreeGrafter"/>
</dbReference>
<dbReference type="CDD" id="cd06503">
    <property type="entry name" value="ATP-synt_Fo_b"/>
    <property type="match status" value="1"/>
</dbReference>
<dbReference type="FunFam" id="1.20.5.620:FF:000001">
    <property type="entry name" value="ATP synthase subunit b"/>
    <property type="match status" value="1"/>
</dbReference>
<dbReference type="Gene3D" id="1.20.5.620">
    <property type="entry name" value="F1F0 ATP synthase subunit B, membrane domain"/>
    <property type="match status" value="1"/>
</dbReference>
<dbReference type="HAMAP" id="MF_01398">
    <property type="entry name" value="ATP_synth_b_bprime"/>
    <property type="match status" value="1"/>
</dbReference>
<dbReference type="InterPro" id="IPR028987">
    <property type="entry name" value="ATP_synth_B-like_membr_sf"/>
</dbReference>
<dbReference type="InterPro" id="IPR002146">
    <property type="entry name" value="ATP_synth_b/b'su_bac/chlpt"/>
</dbReference>
<dbReference type="InterPro" id="IPR005864">
    <property type="entry name" value="ATP_synth_F0_bsu_bac"/>
</dbReference>
<dbReference type="InterPro" id="IPR050059">
    <property type="entry name" value="ATP_synthase_B_chain"/>
</dbReference>
<dbReference type="NCBIfam" id="TIGR01144">
    <property type="entry name" value="ATP_synt_b"/>
    <property type="match status" value="1"/>
</dbReference>
<dbReference type="NCBIfam" id="NF004411">
    <property type="entry name" value="PRK05759.1-2"/>
    <property type="match status" value="1"/>
</dbReference>
<dbReference type="NCBIfam" id="NF004413">
    <property type="entry name" value="PRK05759.1-4"/>
    <property type="match status" value="1"/>
</dbReference>
<dbReference type="PANTHER" id="PTHR33445:SF1">
    <property type="entry name" value="ATP SYNTHASE SUBUNIT B"/>
    <property type="match status" value="1"/>
</dbReference>
<dbReference type="PANTHER" id="PTHR33445">
    <property type="entry name" value="ATP SYNTHASE SUBUNIT B', CHLOROPLASTIC"/>
    <property type="match status" value="1"/>
</dbReference>
<dbReference type="Pfam" id="PF00430">
    <property type="entry name" value="ATP-synt_B"/>
    <property type="match status" value="1"/>
</dbReference>
<dbReference type="SUPFAM" id="SSF81573">
    <property type="entry name" value="F1F0 ATP synthase subunit B, membrane domain"/>
    <property type="match status" value="1"/>
</dbReference>
<feature type="chain" id="PRO_0000082386" description="ATP synthase subunit b">
    <location>
        <begin position="1"/>
        <end position="156"/>
    </location>
</feature>
<feature type="transmembrane region" description="Helical" evidence="1">
    <location>
        <begin position="11"/>
        <end position="31"/>
    </location>
</feature>
<comment type="function">
    <text evidence="1">F(1)F(0) ATP synthase produces ATP from ADP in the presence of a proton or sodium gradient. F-type ATPases consist of two structural domains, F(1) containing the extramembraneous catalytic core and F(0) containing the membrane proton channel, linked together by a central stalk and a peripheral stalk. During catalysis, ATP synthesis in the catalytic domain of F(1) is coupled via a rotary mechanism of the central stalk subunits to proton translocation.</text>
</comment>
<comment type="function">
    <text evidence="1">Component of the F(0) channel, it forms part of the peripheral stalk, linking F(1) to F(0).</text>
</comment>
<comment type="subunit">
    <text evidence="1">F-type ATPases have 2 components, F(1) - the catalytic core - and F(0) - the membrane proton channel. F(1) has five subunits: alpha(3), beta(3), gamma(1), delta(1), epsilon(1). F(0) has three main subunits: a(1), b(2) and c(10-14). The alpha and beta chains form an alternating ring which encloses part of the gamma chain. F(1) is attached to F(0) by a central stalk formed by the gamma and epsilon chains, while a peripheral stalk is formed by the delta and b chains.</text>
</comment>
<comment type="subcellular location">
    <subcellularLocation>
        <location evidence="1">Cell inner membrane</location>
        <topology evidence="1">Single-pass membrane protein</topology>
    </subcellularLocation>
</comment>
<comment type="similarity">
    <text evidence="1">Belongs to the ATPase B chain family.</text>
</comment>
<sequence>MNLNATILGQAIAFVLFVLFCMKYVWPPLMAAIEKRQKEIADGLASAERAHKDLDLAKASATDQLKKAKAEAQVIIEQANKRRSQILDEAKAEAEQERTKIVAQAQAEIEAERKRAREELRKQVAILAVAGAEKIIERSVDEAANSDIVDKLVAEL</sequence>